<keyword id="KW-0687">Ribonucleoprotein</keyword>
<keyword id="KW-0689">Ribosomal protein</keyword>
<keyword id="KW-0694">RNA-binding</keyword>
<keyword id="KW-0699">rRNA-binding</keyword>
<sequence length="202" mass="23150">MVIQRKYRASRRLGVSLWGRSKDPFNTRNYPPGQHGNMGYKKPSDFGKQFGAHKKFKFYYAISSKQMRNMFLKAYKKKGDTGDNFVGLLESMLSSVLYNSGLVPTIFSARQLISHKHVLVNGKVVNISSYSVKPGDTIKLREKAVNLPPVLAAIDAQEQKVPDYLEVDVKERSVKYLRVPKYYEVPYPANMEVNLVIEFYSR</sequence>
<reference key="1">
    <citation type="journal article" date="2005" name="Proc. Natl. Acad. Sci. U.S.A.">
        <title>The genome of the heartwater agent Ehrlichia ruminantium contains multiple tandem repeats of actively variable copy number.</title>
        <authorList>
            <person name="Collins N.E."/>
            <person name="Liebenberg J."/>
            <person name="de Villiers E.P."/>
            <person name="Brayton K.A."/>
            <person name="Louw E."/>
            <person name="Pretorius A."/>
            <person name="Faber F.E."/>
            <person name="van Heerden H."/>
            <person name="Josemans A."/>
            <person name="van Kleef M."/>
            <person name="Steyn H.C."/>
            <person name="van Strijp M.F."/>
            <person name="Zweygarth E."/>
            <person name="Jongejan F."/>
            <person name="Maillard J.C."/>
            <person name="Berthier D."/>
            <person name="Botha M."/>
            <person name="Joubert F."/>
            <person name="Corton C.H."/>
            <person name="Thomson N.R."/>
            <person name="Allsopp M.T."/>
            <person name="Allsopp B.A."/>
        </authorList>
    </citation>
    <scope>NUCLEOTIDE SEQUENCE [LARGE SCALE GENOMIC DNA]</scope>
    <source>
        <strain>Welgevonden</strain>
    </source>
</reference>
<reference key="2">
    <citation type="journal article" date="2006" name="J. Bacteriol.">
        <title>Comparative genomic analysis of three strains of Ehrlichia ruminantium reveals an active process of genome size plasticity.</title>
        <authorList>
            <person name="Frutos R."/>
            <person name="Viari A."/>
            <person name="Ferraz C."/>
            <person name="Morgat A."/>
            <person name="Eychenie S."/>
            <person name="Kandassamy Y."/>
            <person name="Chantal I."/>
            <person name="Bensaid A."/>
            <person name="Coissac E."/>
            <person name="Vachiery N."/>
            <person name="Demaille J."/>
            <person name="Martinez D."/>
        </authorList>
    </citation>
    <scope>NUCLEOTIDE SEQUENCE [LARGE SCALE GENOMIC DNA]</scope>
    <source>
        <strain>Welgevonden</strain>
    </source>
</reference>
<name>RS4_EHRRW</name>
<evidence type="ECO:0000255" key="1">
    <source>
        <dbReference type="HAMAP-Rule" id="MF_01306"/>
    </source>
</evidence>
<evidence type="ECO:0000305" key="2"/>
<comment type="function">
    <text evidence="1">One of the primary rRNA binding proteins, it binds directly to 16S rRNA where it nucleates assembly of the body of the 30S subunit.</text>
</comment>
<comment type="function">
    <text evidence="1">With S5 and S12 plays an important role in translational accuracy.</text>
</comment>
<comment type="subunit">
    <text evidence="1">Part of the 30S ribosomal subunit. Contacts protein S5. The interaction surface between S4 and S5 is involved in control of translational fidelity.</text>
</comment>
<comment type="similarity">
    <text evidence="1">Belongs to the universal ribosomal protein uS4 family.</text>
</comment>
<gene>
    <name evidence="1" type="primary">rpsD</name>
    <name type="ordered locus">Erum1940</name>
    <name type="ordered locus">ERWE_CDS_01960</name>
</gene>
<organism>
    <name type="scientific">Ehrlichia ruminantium (strain Welgevonden)</name>
    <dbReference type="NCBI Taxonomy" id="254945"/>
    <lineage>
        <taxon>Bacteria</taxon>
        <taxon>Pseudomonadati</taxon>
        <taxon>Pseudomonadota</taxon>
        <taxon>Alphaproteobacteria</taxon>
        <taxon>Rickettsiales</taxon>
        <taxon>Anaplasmataceae</taxon>
        <taxon>Ehrlichia</taxon>
    </lineage>
</organism>
<dbReference type="EMBL" id="CR767821">
    <property type="protein sequence ID" value="CAH57912.1"/>
    <property type="molecule type" value="Genomic_DNA"/>
</dbReference>
<dbReference type="EMBL" id="CR925678">
    <property type="protein sequence ID" value="CAI26690.1"/>
    <property type="molecule type" value="Genomic_DNA"/>
</dbReference>
<dbReference type="RefSeq" id="WP_011154880.1">
    <property type="nucleotide sequence ID" value="NC_005295.2"/>
</dbReference>
<dbReference type="SMR" id="Q5HBY1"/>
<dbReference type="GeneID" id="33058243"/>
<dbReference type="KEGG" id="eru:Erum1940"/>
<dbReference type="KEGG" id="erw:ERWE_CDS_01960"/>
<dbReference type="eggNOG" id="COG0522">
    <property type="taxonomic scope" value="Bacteria"/>
</dbReference>
<dbReference type="HOGENOM" id="CLU_092403_0_0_5"/>
<dbReference type="Proteomes" id="UP000001021">
    <property type="component" value="Chromosome"/>
</dbReference>
<dbReference type="GO" id="GO:0015935">
    <property type="term" value="C:small ribosomal subunit"/>
    <property type="evidence" value="ECO:0007669"/>
    <property type="project" value="InterPro"/>
</dbReference>
<dbReference type="GO" id="GO:0019843">
    <property type="term" value="F:rRNA binding"/>
    <property type="evidence" value="ECO:0007669"/>
    <property type="project" value="UniProtKB-UniRule"/>
</dbReference>
<dbReference type="GO" id="GO:0003735">
    <property type="term" value="F:structural constituent of ribosome"/>
    <property type="evidence" value="ECO:0007669"/>
    <property type="project" value="InterPro"/>
</dbReference>
<dbReference type="GO" id="GO:0042274">
    <property type="term" value="P:ribosomal small subunit biogenesis"/>
    <property type="evidence" value="ECO:0007669"/>
    <property type="project" value="TreeGrafter"/>
</dbReference>
<dbReference type="GO" id="GO:0006412">
    <property type="term" value="P:translation"/>
    <property type="evidence" value="ECO:0007669"/>
    <property type="project" value="UniProtKB-UniRule"/>
</dbReference>
<dbReference type="CDD" id="cd00165">
    <property type="entry name" value="S4"/>
    <property type="match status" value="1"/>
</dbReference>
<dbReference type="FunFam" id="3.10.290.10:FF:000001">
    <property type="entry name" value="30S ribosomal protein S4"/>
    <property type="match status" value="1"/>
</dbReference>
<dbReference type="Gene3D" id="1.10.1050.10">
    <property type="entry name" value="Ribosomal Protein S4 Delta 41, Chain A, domain 1"/>
    <property type="match status" value="1"/>
</dbReference>
<dbReference type="Gene3D" id="3.10.290.10">
    <property type="entry name" value="RNA-binding S4 domain"/>
    <property type="match status" value="1"/>
</dbReference>
<dbReference type="HAMAP" id="MF_01306_B">
    <property type="entry name" value="Ribosomal_uS4_B"/>
    <property type="match status" value="1"/>
</dbReference>
<dbReference type="InterPro" id="IPR022801">
    <property type="entry name" value="Ribosomal_uS4"/>
</dbReference>
<dbReference type="InterPro" id="IPR005709">
    <property type="entry name" value="Ribosomal_uS4_bac-type"/>
</dbReference>
<dbReference type="InterPro" id="IPR001912">
    <property type="entry name" value="Ribosomal_uS4_N"/>
</dbReference>
<dbReference type="InterPro" id="IPR002942">
    <property type="entry name" value="S4_RNA-bd"/>
</dbReference>
<dbReference type="InterPro" id="IPR036986">
    <property type="entry name" value="S4_RNA-bd_sf"/>
</dbReference>
<dbReference type="NCBIfam" id="NF003717">
    <property type="entry name" value="PRK05327.1"/>
    <property type="match status" value="1"/>
</dbReference>
<dbReference type="NCBIfam" id="TIGR01017">
    <property type="entry name" value="rpsD_bact"/>
    <property type="match status" value="1"/>
</dbReference>
<dbReference type="PANTHER" id="PTHR11831">
    <property type="entry name" value="30S 40S RIBOSOMAL PROTEIN"/>
    <property type="match status" value="1"/>
</dbReference>
<dbReference type="PANTHER" id="PTHR11831:SF4">
    <property type="entry name" value="SMALL RIBOSOMAL SUBUNIT PROTEIN US4M"/>
    <property type="match status" value="1"/>
</dbReference>
<dbReference type="Pfam" id="PF00163">
    <property type="entry name" value="Ribosomal_S4"/>
    <property type="match status" value="1"/>
</dbReference>
<dbReference type="Pfam" id="PF01479">
    <property type="entry name" value="S4"/>
    <property type="match status" value="1"/>
</dbReference>
<dbReference type="SMART" id="SM01390">
    <property type="entry name" value="Ribosomal_S4"/>
    <property type="match status" value="1"/>
</dbReference>
<dbReference type="SMART" id="SM00363">
    <property type="entry name" value="S4"/>
    <property type="match status" value="1"/>
</dbReference>
<dbReference type="SUPFAM" id="SSF55174">
    <property type="entry name" value="Alpha-L RNA-binding motif"/>
    <property type="match status" value="1"/>
</dbReference>
<dbReference type="PROSITE" id="PS50889">
    <property type="entry name" value="S4"/>
    <property type="match status" value="1"/>
</dbReference>
<feature type="chain" id="PRO_0000293275" description="Small ribosomal subunit protein uS4">
    <location>
        <begin position="1"/>
        <end position="202"/>
    </location>
</feature>
<feature type="domain" description="S4 RNA-binding" evidence="1">
    <location>
        <begin position="91"/>
        <end position="168"/>
    </location>
</feature>
<protein>
    <recommendedName>
        <fullName evidence="1">Small ribosomal subunit protein uS4</fullName>
    </recommendedName>
    <alternativeName>
        <fullName evidence="2">30S ribosomal protein S4</fullName>
    </alternativeName>
</protein>
<proteinExistence type="inferred from homology"/>
<accession>Q5HBY1</accession>
<accession>Q5FD09</accession>